<feature type="chain" id="PRO_0000144903" description="Aspartate dehydrogenase domain-containing protein">
    <location>
        <begin position="1"/>
        <end position="276"/>
    </location>
</feature>
<gene>
    <name type="primary">aspdh</name>
    <name type="ORF">zgc:103722</name>
</gene>
<sequence length="276" mass="29753">MADKALKVGIVGYGHLGQFLVEKIQSEGAEVGLQLAFVWNRNADKLKDSLPKDLILHDLSDFTQRDTDVIVEVCHPLIVKEFGVRFLSHAHFLVGSPSALSDGQLEQDLRTAAKQQGKTLYVPSGALWGGQDIQKMNDSGTLRALSIRMSKHPSCFRLTGGLLSDWTEGEGRRVLYRGSVAELCPLAPNNVNTMAAAAIAASKLGFHGVTGEIVSDTALADYHVVEVDVTGPDGFSVKTMRQNPAKLGAVTGKATYNSFWSSLLVCKGHGGRVYLC</sequence>
<organism>
    <name type="scientific">Danio rerio</name>
    <name type="common">Zebrafish</name>
    <name type="synonym">Brachydanio rerio</name>
    <dbReference type="NCBI Taxonomy" id="7955"/>
    <lineage>
        <taxon>Eukaryota</taxon>
        <taxon>Metazoa</taxon>
        <taxon>Chordata</taxon>
        <taxon>Craniata</taxon>
        <taxon>Vertebrata</taxon>
        <taxon>Euteleostomi</taxon>
        <taxon>Actinopterygii</taxon>
        <taxon>Neopterygii</taxon>
        <taxon>Teleostei</taxon>
        <taxon>Ostariophysi</taxon>
        <taxon>Cypriniformes</taxon>
        <taxon>Danionidae</taxon>
        <taxon>Danioninae</taxon>
        <taxon>Danio</taxon>
    </lineage>
</organism>
<evidence type="ECO:0000305" key="1"/>
<dbReference type="EMBL" id="BC081519">
    <property type="protein sequence ID" value="AAH81519.1"/>
    <property type="molecule type" value="mRNA"/>
</dbReference>
<dbReference type="RefSeq" id="NP_001004657.1">
    <property type="nucleotide sequence ID" value="NM_001004657.1"/>
</dbReference>
<dbReference type="SMR" id="Q66I59"/>
<dbReference type="FunCoup" id="Q66I59">
    <property type="interactions" value="179"/>
</dbReference>
<dbReference type="STRING" id="7955.ENSDARP00000055854"/>
<dbReference type="PaxDb" id="7955-ENSDARP00000055854"/>
<dbReference type="GeneID" id="447919"/>
<dbReference type="KEGG" id="dre:447919"/>
<dbReference type="AGR" id="ZFIN:ZDB-GENE-040912-102"/>
<dbReference type="CTD" id="554235"/>
<dbReference type="ZFIN" id="ZDB-GENE-040912-102">
    <property type="gene designation" value="aspdh"/>
</dbReference>
<dbReference type="eggNOG" id="ENOG502QVGC">
    <property type="taxonomic scope" value="Eukaryota"/>
</dbReference>
<dbReference type="InParanoid" id="Q66I59"/>
<dbReference type="OrthoDB" id="4310724at2759"/>
<dbReference type="PhylomeDB" id="Q66I59"/>
<dbReference type="PRO" id="PR:Q66I59"/>
<dbReference type="Proteomes" id="UP000000437">
    <property type="component" value="Chromosome 3"/>
</dbReference>
<dbReference type="GO" id="GO:0033735">
    <property type="term" value="F:aspartate dehydrogenase activity"/>
    <property type="evidence" value="ECO:0007669"/>
    <property type="project" value="UniProtKB-EC"/>
</dbReference>
<dbReference type="GO" id="GO:0050661">
    <property type="term" value="F:NADP binding"/>
    <property type="evidence" value="ECO:0007669"/>
    <property type="project" value="InterPro"/>
</dbReference>
<dbReference type="GO" id="GO:0009435">
    <property type="term" value="P:NAD biosynthetic process"/>
    <property type="evidence" value="ECO:0007669"/>
    <property type="project" value="InterPro"/>
</dbReference>
<dbReference type="Gene3D" id="3.30.360.10">
    <property type="entry name" value="Dihydrodipicolinate Reductase, domain 2"/>
    <property type="match status" value="1"/>
</dbReference>
<dbReference type="Gene3D" id="3.40.50.720">
    <property type="entry name" value="NAD(P)-binding Rossmann-like Domain"/>
    <property type="match status" value="1"/>
</dbReference>
<dbReference type="InterPro" id="IPR005106">
    <property type="entry name" value="Asp/hSer_DH_NAD-bd"/>
</dbReference>
<dbReference type="InterPro" id="IPR002811">
    <property type="entry name" value="Asp_DH"/>
</dbReference>
<dbReference type="InterPro" id="IPR011182">
    <property type="entry name" value="L-Asp_DH"/>
</dbReference>
<dbReference type="InterPro" id="IPR036291">
    <property type="entry name" value="NAD(P)-bd_dom_sf"/>
</dbReference>
<dbReference type="PANTHER" id="PTHR31873:SF6">
    <property type="entry name" value="ASPARTATE DEHYDROGENASE DOMAIN-CONTAINING PROTEIN"/>
    <property type="match status" value="1"/>
</dbReference>
<dbReference type="PANTHER" id="PTHR31873">
    <property type="entry name" value="L-ASPARTATE DEHYDROGENASE-RELATED"/>
    <property type="match status" value="1"/>
</dbReference>
<dbReference type="Pfam" id="PF01958">
    <property type="entry name" value="Asp_DH_C"/>
    <property type="match status" value="1"/>
</dbReference>
<dbReference type="Pfam" id="PF03447">
    <property type="entry name" value="NAD_binding_3"/>
    <property type="match status" value="1"/>
</dbReference>
<dbReference type="PIRSF" id="PIRSF005227">
    <property type="entry name" value="Asp_dh_NAD_syn"/>
    <property type="match status" value="1"/>
</dbReference>
<dbReference type="SUPFAM" id="SSF55347">
    <property type="entry name" value="Glyceraldehyde-3-phosphate dehydrogenase-like, C-terminal domain"/>
    <property type="match status" value="1"/>
</dbReference>
<dbReference type="SUPFAM" id="SSF51735">
    <property type="entry name" value="NAD(P)-binding Rossmann-fold domains"/>
    <property type="match status" value="1"/>
</dbReference>
<comment type="similarity">
    <text evidence="1">Belongs to the L-aspartate dehydrogenase family.</text>
</comment>
<keyword id="KW-1185">Reference proteome</keyword>
<reference key="1">
    <citation type="submission" date="2004-09" db="EMBL/GenBank/DDBJ databases">
        <authorList>
            <consortium name="NIH - Zebrafish Gene Collection (ZGC) project"/>
        </authorList>
    </citation>
    <scope>NUCLEOTIDE SEQUENCE [LARGE SCALE MRNA]</scope>
    <source>
        <tissue>Liver</tissue>
    </source>
</reference>
<name>ASPDH_DANRE</name>
<accession>Q66I59</accession>
<protein>
    <recommendedName>
        <fullName evidence="1">Aspartate dehydrogenase domain-containing protein</fullName>
    </recommendedName>
</protein>
<proteinExistence type="evidence at transcript level"/>